<name>APT_MACCJ</name>
<accession>B9E711</accession>
<protein>
    <recommendedName>
        <fullName evidence="1">Adenine phosphoribosyltransferase</fullName>
        <shortName evidence="1">APRT</shortName>
        <ecNumber evidence="1">2.4.2.7</ecNumber>
    </recommendedName>
</protein>
<evidence type="ECO:0000255" key="1">
    <source>
        <dbReference type="HAMAP-Rule" id="MF_00004"/>
    </source>
</evidence>
<dbReference type="EC" id="2.4.2.7" evidence="1"/>
<dbReference type="EMBL" id="AP009484">
    <property type="protein sequence ID" value="BAH17979.1"/>
    <property type="molecule type" value="Genomic_DNA"/>
</dbReference>
<dbReference type="RefSeq" id="WP_012657177.1">
    <property type="nucleotide sequence ID" value="NC_011999.1"/>
</dbReference>
<dbReference type="SMR" id="B9E711"/>
<dbReference type="STRING" id="458233.MCCL_1272"/>
<dbReference type="GeneID" id="61128830"/>
<dbReference type="KEGG" id="mcl:MCCL_1272"/>
<dbReference type="eggNOG" id="COG0503">
    <property type="taxonomic scope" value="Bacteria"/>
</dbReference>
<dbReference type="HOGENOM" id="CLU_063339_3_0_9"/>
<dbReference type="OrthoDB" id="9803963at2"/>
<dbReference type="UniPathway" id="UPA00588">
    <property type="reaction ID" value="UER00646"/>
</dbReference>
<dbReference type="Proteomes" id="UP000001383">
    <property type="component" value="Chromosome"/>
</dbReference>
<dbReference type="GO" id="GO:0005737">
    <property type="term" value="C:cytoplasm"/>
    <property type="evidence" value="ECO:0007669"/>
    <property type="project" value="UniProtKB-SubCell"/>
</dbReference>
<dbReference type="GO" id="GO:0002055">
    <property type="term" value="F:adenine binding"/>
    <property type="evidence" value="ECO:0007669"/>
    <property type="project" value="TreeGrafter"/>
</dbReference>
<dbReference type="GO" id="GO:0003999">
    <property type="term" value="F:adenine phosphoribosyltransferase activity"/>
    <property type="evidence" value="ECO:0007669"/>
    <property type="project" value="UniProtKB-UniRule"/>
</dbReference>
<dbReference type="GO" id="GO:0016208">
    <property type="term" value="F:AMP binding"/>
    <property type="evidence" value="ECO:0007669"/>
    <property type="project" value="TreeGrafter"/>
</dbReference>
<dbReference type="GO" id="GO:0006168">
    <property type="term" value="P:adenine salvage"/>
    <property type="evidence" value="ECO:0007669"/>
    <property type="project" value="InterPro"/>
</dbReference>
<dbReference type="GO" id="GO:0044209">
    <property type="term" value="P:AMP salvage"/>
    <property type="evidence" value="ECO:0007669"/>
    <property type="project" value="UniProtKB-UniRule"/>
</dbReference>
<dbReference type="GO" id="GO:0006166">
    <property type="term" value="P:purine ribonucleoside salvage"/>
    <property type="evidence" value="ECO:0007669"/>
    <property type="project" value="UniProtKB-KW"/>
</dbReference>
<dbReference type="CDD" id="cd06223">
    <property type="entry name" value="PRTases_typeI"/>
    <property type="match status" value="1"/>
</dbReference>
<dbReference type="FunFam" id="3.40.50.2020:FF:000004">
    <property type="entry name" value="Adenine phosphoribosyltransferase"/>
    <property type="match status" value="1"/>
</dbReference>
<dbReference type="Gene3D" id="3.40.50.2020">
    <property type="match status" value="1"/>
</dbReference>
<dbReference type="HAMAP" id="MF_00004">
    <property type="entry name" value="Aden_phosphoribosyltr"/>
    <property type="match status" value="1"/>
</dbReference>
<dbReference type="InterPro" id="IPR005764">
    <property type="entry name" value="Ade_phspho_trans"/>
</dbReference>
<dbReference type="InterPro" id="IPR000836">
    <property type="entry name" value="PRibTrfase_dom"/>
</dbReference>
<dbReference type="InterPro" id="IPR029057">
    <property type="entry name" value="PRTase-like"/>
</dbReference>
<dbReference type="InterPro" id="IPR050054">
    <property type="entry name" value="UPRTase/APRTase"/>
</dbReference>
<dbReference type="NCBIfam" id="TIGR01090">
    <property type="entry name" value="apt"/>
    <property type="match status" value="1"/>
</dbReference>
<dbReference type="NCBIfam" id="NF002633">
    <property type="entry name" value="PRK02304.1-2"/>
    <property type="match status" value="1"/>
</dbReference>
<dbReference type="NCBIfam" id="NF002634">
    <property type="entry name" value="PRK02304.1-3"/>
    <property type="match status" value="1"/>
</dbReference>
<dbReference type="NCBIfam" id="NF002636">
    <property type="entry name" value="PRK02304.1-5"/>
    <property type="match status" value="1"/>
</dbReference>
<dbReference type="PANTHER" id="PTHR32315">
    <property type="entry name" value="ADENINE PHOSPHORIBOSYLTRANSFERASE"/>
    <property type="match status" value="1"/>
</dbReference>
<dbReference type="PANTHER" id="PTHR32315:SF3">
    <property type="entry name" value="ADENINE PHOSPHORIBOSYLTRANSFERASE"/>
    <property type="match status" value="1"/>
</dbReference>
<dbReference type="Pfam" id="PF00156">
    <property type="entry name" value="Pribosyltran"/>
    <property type="match status" value="1"/>
</dbReference>
<dbReference type="SUPFAM" id="SSF53271">
    <property type="entry name" value="PRTase-like"/>
    <property type="match status" value="1"/>
</dbReference>
<sequence length="173" mass="19198">MDLKQYITQVKDWPKPGVNFKDITTIMDNGAAYKYATDQIVEYAKEKQVDIVVGPEARGFIIGCPVAYAMNIGFAPVRKKGKLPREVISYEYELEYGTNVLTMHKDAIKPGQRVLITDDLLATGGTIEATIKLVESLGGIVAGIAFIIDLKYLNGMEKLKGYDVISLVEYEVE</sequence>
<reference key="1">
    <citation type="journal article" date="2009" name="J. Bacteriol.">
        <title>Complete genome sequence of Macrococcus caseolyticus strain JCSCS5402, reflecting the ancestral genome of the human-pathogenic staphylococci.</title>
        <authorList>
            <person name="Baba T."/>
            <person name="Kuwahara-Arai K."/>
            <person name="Uchiyama I."/>
            <person name="Takeuchi F."/>
            <person name="Ito T."/>
            <person name="Hiramatsu K."/>
        </authorList>
    </citation>
    <scope>NUCLEOTIDE SEQUENCE [LARGE SCALE GENOMIC DNA]</scope>
    <source>
        <strain>JCSC5402</strain>
    </source>
</reference>
<comment type="function">
    <text evidence="1">Catalyzes a salvage reaction resulting in the formation of AMP, that is energically less costly than de novo synthesis.</text>
</comment>
<comment type="catalytic activity">
    <reaction evidence="1">
        <text>AMP + diphosphate = 5-phospho-alpha-D-ribose 1-diphosphate + adenine</text>
        <dbReference type="Rhea" id="RHEA:16609"/>
        <dbReference type="ChEBI" id="CHEBI:16708"/>
        <dbReference type="ChEBI" id="CHEBI:33019"/>
        <dbReference type="ChEBI" id="CHEBI:58017"/>
        <dbReference type="ChEBI" id="CHEBI:456215"/>
        <dbReference type="EC" id="2.4.2.7"/>
    </reaction>
</comment>
<comment type="pathway">
    <text evidence="1">Purine metabolism; AMP biosynthesis via salvage pathway; AMP from adenine: step 1/1.</text>
</comment>
<comment type="subunit">
    <text evidence="1">Homodimer.</text>
</comment>
<comment type="subcellular location">
    <subcellularLocation>
        <location evidence="1">Cytoplasm</location>
    </subcellularLocation>
</comment>
<comment type="similarity">
    <text evidence="1">Belongs to the purine/pyrimidine phosphoribosyltransferase family.</text>
</comment>
<feature type="chain" id="PRO_1000116248" description="Adenine phosphoribosyltransferase">
    <location>
        <begin position="1"/>
        <end position="173"/>
    </location>
</feature>
<gene>
    <name evidence="1" type="primary">apt</name>
    <name type="ordered locus">MCCL_1272</name>
</gene>
<organism>
    <name type="scientific">Macrococcus caseolyticus (strain JCSC5402)</name>
    <name type="common">Macrococcoides caseolyticum</name>
    <dbReference type="NCBI Taxonomy" id="458233"/>
    <lineage>
        <taxon>Bacteria</taxon>
        <taxon>Bacillati</taxon>
        <taxon>Bacillota</taxon>
        <taxon>Bacilli</taxon>
        <taxon>Bacillales</taxon>
        <taxon>Staphylococcaceae</taxon>
        <taxon>Macrococcoides</taxon>
    </lineage>
</organism>
<proteinExistence type="inferred from homology"/>
<keyword id="KW-0963">Cytoplasm</keyword>
<keyword id="KW-0328">Glycosyltransferase</keyword>
<keyword id="KW-0660">Purine salvage</keyword>
<keyword id="KW-1185">Reference proteome</keyword>
<keyword id="KW-0808">Transferase</keyword>